<feature type="signal peptide" evidence="1">
    <location>
        <begin position="1"/>
        <end position="35"/>
    </location>
</feature>
<feature type="chain" id="PRO_0000289036" description="Cytochrome f">
    <location>
        <begin position="36"/>
        <end position="320"/>
    </location>
</feature>
<feature type="transmembrane region" description="Helical" evidence="2">
    <location>
        <begin position="286"/>
        <end position="305"/>
    </location>
</feature>
<feature type="binding site" description="axial binding residue" evidence="1">
    <location>
        <position position="36"/>
    </location>
    <ligand>
        <name>heme</name>
        <dbReference type="ChEBI" id="CHEBI:30413"/>
    </ligand>
    <ligandPart>
        <name>Fe</name>
        <dbReference type="ChEBI" id="CHEBI:18248"/>
    </ligandPart>
</feature>
<feature type="binding site" description="covalent" evidence="1">
    <location>
        <position position="56"/>
    </location>
    <ligand>
        <name>heme</name>
        <dbReference type="ChEBI" id="CHEBI:30413"/>
    </ligand>
</feature>
<feature type="binding site" description="covalent" evidence="1">
    <location>
        <position position="59"/>
    </location>
    <ligand>
        <name>heme</name>
        <dbReference type="ChEBI" id="CHEBI:30413"/>
    </ligand>
</feature>
<feature type="binding site" description="axial binding residue" evidence="1">
    <location>
        <position position="60"/>
    </location>
    <ligand>
        <name>heme</name>
        <dbReference type="ChEBI" id="CHEBI:30413"/>
    </ligand>
    <ligandPart>
        <name>Fe</name>
        <dbReference type="ChEBI" id="CHEBI:18248"/>
    </ligandPart>
</feature>
<organism>
    <name type="scientific">Oryza sativa subsp. indica</name>
    <name type="common">Rice</name>
    <dbReference type="NCBI Taxonomy" id="39946"/>
    <lineage>
        <taxon>Eukaryota</taxon>
        <taxon>Viridiplantae</taxon>
        <taxon>Streptophyta</taxon>
        <taxon>Embryophyta</taxon>
        <taxon>Tracheophyta</taxon>
        <taxon>Spermatophyta</taxon>
        <taxon>Magnoliopsida</taxon>
        <taxon>Liliopsida</taxon>
        <taxon>Poales</taxon>
        <taxon>Poaceae</taxon>
        <taxon>BOP clade</taxon>
        <taxon>Oryzoideae</taxon>
        <taxon>Oryzeae</taxon>
        <taxon>Oryzinae</taxon>
        <taxon>Oryza</taxon>
        <taxon>Oryza sativa</taxon>
    </lineage>
</organism>
<dbReference type="EMBL" id="AY522329">
    <property type="protein sequence ID" value="AAS46064.1"/>
    <property type="molecule type" value="Genomic_DNA"/>
</dbReference>
<dbReference type="RefSeq" id="YP_009161377.1">
    <property type="nucleotide sequence ID" value="NC_027678.1"/>
</dbReference>
<dbReference type="RefSeq" id="YP_654224.1">
    <property type="nucleotide sequence ID" value="NC_008155.1"/>
</dbReference>
<dbReference type="SMR" id="P0C388"/>
<dbReference type="STRING" id="39946.P0C388"/>
<dbReference type="GeneID" id="4126888"/>
<dbReference type="Proteomes" id="UP000007015">
    <property type="component" value="Chloroplast"/>
</dbReference>
<dbReference type="GO" id="GO:0009535">
    <property type="term" value="C:chloroplast thylakoid membrane"/>
    <property type="evidence" value="ECO:0007669"/>
    <property type="project" value="UniProtKB-SubCell"/>
</dbReference>
<dbReference type="GO" id="GO:0009536">
    <property type="term" value="C:plastid"/>
    <property type="evidence" value="ECO:0000305"/>
    <property type="project" value="Gramene"/>
</dbReference>
<dbReference type="GO" id="GO:0009055">
    <property type="term" value="F:electron transfer activity"/>
    <property type="evidence" value="ECO:0007669"/>
    <property type="project" value="UniProtKB-UniRule"/>
</dbReference>
<dbReference type="GO" id="GO:0020037">
    <property type="term" value="F:heme binding"/>
    <property type="evidence" value="ECO:0007669"/>
    <property type="project" value="InterPro"/>
</dbReference>
<dbReference type="GO" id="GO:0005506">
    <property type="term" value="F:iron ion binding"/>
    <property type="evidence" value="ECO:0007669"/>
    <property type="project" value="InterPro"/>
</dbReference>
<dbReference type="GO" id="GO:0015979">
    <property type="term" value="P:photosynthesis"/>
    <property type="evidence" value="ECO:0007669"/>
    <property type="project" value="UniProtKB-UniRule"/>
</dbReference>
<dbReference type="FunFam" id="1.20.5.700:FF:000001">
    <property type="entry name" value="Cytochrome f"/>
    <property type="match status" value="1"/>
</dbReference>
<dbReference type="FunFam" id="2.40.50.100:FF:000007">
    <property type="entry name" value="Cytochrome f"/>
    <property type="match status" value="1"/>
</dbReference>
<dbReference type="FunFam" id="2.60.40.830:FF:000001">
    <property type="entry name" value="Cytochrome f"/>
    <property type="match status" value="1"/>
</dbReference>
<dbReference type="Gene3D" id="2.40.50.100">
    <property type="match status" value="1"/>
</dbReference>
<dbReference type="Gene3D" id="2.60.40.830">
    <property type="entry name" value="Cytochrome f large domain"/>
    <property type="match status" value="1"/>
</dbReference>
<dbReference type="Gene3D" id="1.20.5.700">
    <property type="entry name" value="Single helix bin"/>
    <property type="match status" value="1"/>
</dbReference>
<dbReference type="HAMAP" id="MF_00610">
    <property type="entry name" value="Cytb6_f_cytF"/>
    <property type="match status" value="1"/>
</dbReference>
<dbReference type="InterPro" id="IPR024058">
    <property type="entry name" value="Cyt-f_TM"/>
</dbReference>
<dbReference type="InterPro" id="IPR002325">
    <property type="entry name" value="Cyt_f"/>
</dbReference>
<dbReference type="InterPro" id="IPR024094">
    <property type="entry name" value="Cyt_f_lg_dom"/>
</dbReference>
<dbReference type="InterPro" id="IPR036826">
    <property type="entry name" value="Cyt_f_lg_dom_sf"/>
</dbReference>
<dbReference type="InterPro" id="IPR011054">
    <property type="entry name" value="Rudment_hybrid_motif"/>
</dbReference>
<dbReference type="PANTHER" id="PTHR33288">
    <property type="match status" value="1"/>
</dbReference>
<dbReference type="PANTHER" id="PTHR33288:SF10">
    <property type="entry name" value="CYTOCHROME F"/>
    <property type="match status" value="1"/>
</dbReference>
<dbReference type="Pfam" id="PF01333">
    <property type="entry name" value="Apocytochr_F_C"/>
    <property type="match status" value="1"/>
</dbReference>
<dbReference type="Pfam" id="PF16639">
    <property type="entry name" value="Apocytochr_F_N"/>
    <property type="match status" value="1"/>
</dbReference>
<dbReference type="PRINTS" id="PR00610">
    <property type="entry name" value="CYTOCHROMEF"/>
</dbReference>
<dbReference type="SUPFAM" id="SSF103431">
    <property type="entry name" value="Cytochrome f subunit of the cytochrome b6f complex, transmembrane anchor"/>
    <property type="match status" value="1"/>
</dbReference>
<dbReference type="SUPFAM" id="SSF49441">
    <property type="entry name" value="Cytochrome f, large domain"/>
    <property type="match status" value="1"/>
</dbReference>
<dbReference type="SUPFAM" id="SSF51246">
    <property type="entry name" value="Rudiment single hybrid motif"/>
    <property type="match status" value="1"/>
</dbReference>
<dbReference type="PROSITE" id="PS51010">
    <property type="entry name" value="CYTF"/>
    <property type="match status" value="1"/>
</dbReference>
<protein>
    <recommendedName>
        <fullName>Cytochrome f</fullName>
    </recommendedName>
</protein>
<geneLocation type="chloroplast"/>
<accession>P0C388</accession>
<accession>P07888</accession>
<accession>Q6QXT8</accession>
<accession>Q6QY65</accession>
<gene>
    <name type="primary">petA</name>
    <name type="ORF">9311073</name>
</gene>
<evidence type="ECO:0000250" key="1"/>
<evidence type="ECO:0000255" key="2"/>
<evidence type="ECO:0000305" key="3"/>
<proteinExistence type="inferred from homology"/>
<reference key="1">
    <citation type="journal article" date="2004" name="Plant Physiol.">
        <title>A comparison of rice chloroplast genomes.</title>
        <authorList>
            <person name="Tang J."/>
            <person name="Xia H."/>
            <person name="Cao M."/>
            <person name="Zhang X."/>
            <person name="Zeng W."/>
            <person name="Hu S."/>
            <person name="Tong W."/>
            <person name="Wang J."/>
            <person name="Wang J."/>
            <person name="Yu J."/>
            <person name="Yang H."/>
            <person name="Zhu L."/>
        </authorList>
    </citation>
    <scope>NUCLEOTIDE SEQUENCE [LARGE SCALE GENOMIC DNA]</scope>
    <source>
        <strain>cv. 93-11</strain>
    </source>
</reference>
<name>CYF_ORYSI</name>
<sequence>MENRNTFSWVKEQMTRSISVSIMIYVITRTSISNAYPIFAQQGYENPREATGRIVCANCHLANKPVDIEVPQAVLPDTVFEAVLRIPYDMQLKQVLANGKKGGLNVGAVLILPEGFELAPPDRISPELKEKIGNLSFQSYRPNKKNILVIGPVPGKKYSEIVFPILSPDPAMKKDVHFLKYPIYVGGNRGRGQIYPDGSKSNNTVYNATSTGVVRKILRKEKGGYEISIVDASDGRQVIDLIPPGPELLVSEGESIKLDQPLTSNPNVGGFGQGDAEIVLQDPLRVQGLLFFFASVILAQVFLVLKKKQFEKVQLYEMNF</sequence>
<comment type="function">
    <text evidence="1">Component of the cytochrome b6-f complex, which mediates electron transfer between photosystem II (PSII) and photosystem I (PSI), cyclic electron flow around PSI, and state transitions.</text>
</comment>
<comment type="cofactor">
    <cofactor evidence="1">
        <name>heme</name>
        <dbReference type="ChEBI" id="CHEBI:30413"/>
    </cofactor>
    <text evidence="1">Binds 1 heme group covalently.</text>
</comment>
<comment type="subunit">
    <text evidence="1">The 4 large subunits of the cytochrome b6-f complex are cytochrome b6, subunit IV (17 kDa polypeptide, petD), cytochrome f and the Rieske protein, while the 4 small subunits are PetG, PetL, PetM and PetN. The complex functions as a dimer (By similarity).</text>
</comment>
<comment type="subcellular location">
    <subcellularLocation>
        <location evidence="1">Plastid</location>
        <location evidence="1">Chloroplast thylakoid membrane</location>
        <topology evidence="1">Single-pass membrane protein</topology>
    </subcellularLocation>
</comment>
<comment type="similarity">
    <text evidence="3">Belongs to the cytochrome f family.</text>
</comment>
<keyword id="KW-0150">Chloroplast</keyword>
<keyword id="KW-0249">Electron transport</keyword>
<keyword id="KW-0349">Heme</keyword>
<keyword id="KW-0408">Iron</keyword>
<keyword id="KW-0472">Membrane</keyword>
<keyword id="KW-0479">Metal-binding</keyword>
<keyword id="KW-0602">Photosynthesis</keyword>
<keyword id="KW-0934">Plastid</keyword>
<keyword id="KW-1185">Reference proteome</keyword>
<keyword id="KW-0732">Signal</keyword>
<keyword id="KW-0793">Thylakoid</keyword>
<keyword id="KW-0812">Transmembrane</keyword>
<keyword id="KW-1133">Transmembrane helix</keyword>
<keyword id="KW-0813">Transport</keyword>